<gene>
    <name evidence="1" type="primary">recO</name>
    <name type="ordered locus">CKL_0917</name>
</gene>
<accession>A5N6N7</accession>
<sequence>MGDDFLAIFKTRAIIIKTQDIKESDKLVWLFTEKLGKISTIAKGSKKSRSPLFSTTLQFCYGDYVVYKGKSLYVINESSLIDSFQHLLNDLNDLTYASYFCELTDIAMDDGESSRELFRYLATSFYLIRSHAVDIETLARTFELKILKTTGYGLNFDYCALCRKKITSFEYLHLQYLGGICRECDKENSMHISYSTCSALKYLSSISMENVYKVVLTKEVKEELYKVLTLIISQNYFRKPKSLDILRNLISFEKNKV</sequence>
<feature type="chain" id="PRO_1000077726" description="DNA repair protein RecO">
    <location>
        <begin position="1"/>
        <end position="257"/>
    </location>
</feature>
<protein>
    <recommendedName>
        <fullName evidence="1">DNA repair protein RecO</fullName>
    </recommendedName>
    <alternativeName>
        <fullName evidence="1">Recombination protein O</fullName>
    </alternativeName>
</protein>
<dbReference type="EMBL" id="CP000673">
    <property type="protein sequence ID" value="EDK32968.1"/>
    <property type="molecule type" value="Genomic_DNA"/>
</dbReference>
<dbReference type="RefSeq" id="WP_012101296.1">
    <property type="nucleotide sequence ID" value="NC_009706.1"/>
</dbReference>
<dbReference type="SMR" id="A5N6N7"/>
<dbReference type="STRING" id="431943.CKL_0917"/>
<dbReference type="KEGG" id="ckl:CKL_0917"/>
<dbReference type="eggNOG" id="COG1381">
    <property type="taxonomic scope" value="Bacteria"/>
</dbReference>
<dbReference type="HOGENOM" id="CLU_066632_3_1_9"/>
<dbReference type="Proteomes" id="UP000002411">
    <property type="component" value="Chromosome"/>
</dbReference>
<dbReference type="GO" id="GO:0043590">
    <property type="term" value="C:bacterial nucleoid"/>
    <property type="evidence" value="ECO:0007669"/>
    <property type="project" value="TreeGrafter"/>
</dbReference>
<dbReference type="GO" id="GO:0006310">
    <property type="term" value="P:DNA recombination"/>
    <property type="evidence" value="ECO:0007669"/>
    <property type="project" value="UniProtKB-UniRule"/>
</dbReference>
<dbReference type="GO" id="GO:0006302">
    <property type="term" value="P:double-strand break repair"/>
    <property type="evidence" value="ECO:0007669"/>
    <property type="project" value="TreeGrafter"/>
</dbReference>
<dbReference type="Gene3D" id="2.40.50.140">
    <property type="entry name" value="Nucleic acid-binding proteins"/>
    <property type="match status" value="1"/>
</dbReference>
<dbReference type="Gene3D" id="1.20.1440.120">
    <property type="entry name" value="Recombination protein O, C-terminal domain"/>
    <property type="match status" value="1"/>
</dbReference>
<dbReference type="HAMAP" id="MF_00201">
    <property type="entry name" value="RecO"/>
    <property type="match status" value="1"/>
</dbReference>
<dbReference type="InterPro" id="IPR037278">
    <property type="entry name" value="ARFGAP/RecO"/>
</dbReference>
<dbReference type="InterPro" id="IPR022572">
    <property type="entry name" value="DNA_rep/recomb_RecO_N"/>
</dbReference>
<dbReference type="InterPro" id="IPR012340">
    <property type="entry name" value="NA-bd_OB-fold"/>
</dbReference>
<dbReference type="InterPro" id="IPR003717">
    <property type="entry name" value="RecO"/>
</dbReference>
<dbReference type="InterPro" id="IPR042242">
    <property type="entry name" value="RecO_C"/>
</dbReference>
<dbReference type="NCBIfam" id="TIGR00613">
    <property type="entry name" value="reco"/>
    <property type="match status" value="1"/>
</dbReference>
<dbReference type="PANTHER" id="PTHR33991">
    <property type="entry name" value="DNA REPAIR PROTEIN RECO"/>
    <property type="match status" value="1"/>
</dbReference>
<dbReference type="PANTHER" id="PTHR33991:SF1">
    <property type="entry name" value="DNA REPAIR PROTEIN RECO"/>
    <property type="match status" value="1"/>
</dbReference>
<dbReference type="Pfam" id="PF02565">
    <property type="entry name" value="RecO_C"/>
    <property type="match status" value="1"/>
</dbReference>
<dbReference type="Pfam" id="PF11967">
    <property type="entry name" value="RecO_N"/>
    <property type="match status" value="1"/>
</dbReference>
<dbReference type="SUPFAM" id="SSF57863">
    <property type="entry name" value="ArfGap/RecO-like zinc finger"/>
    <property type="match status" value="1"/>
</dbReference>
<dbReference type="SUPFAM" id="SSF50249">
    <property type="entry name" value="Nucleic acid-binding proteins"/>
    <property type="match status" value="1"/>
</dbReference>
<keyword id="KW-0227">DNA damage</keyword>
<keyword id="KW-0233">DNA recombination</keyword>
<keyword id="KW-0234">DNA repair</keyword>
<keyword id="KW-1185">Reference proteome</keyword>
<comment type="function">
    <text evidence="1">Involved in DNA repair and RecF pathway recombination.</text>
</comment>
<comment type="similarity">
    <text evidence="1">Belongs to the RecO family.</text>
</comment>
<proteinExistence type="inferred from homology"/>
<reference key="1">
    <citation type="journal article" date="2008" name="Proc. Natl. Acad. Sci. U.S.A.">
        <title>The genome of Clostridium kluyveri, a strict anaerobe with unique metabolic features.</title>
        <authorList>
            <person name="Seedorf H."/>
            <person name="Fricke W.F."/>
            <person name="Veith B."/>
            <person name="Brueggemann H."/>
            <person name="Liesegang H."/>
            <person name="Strittmatter A."/>
            <person name="Miethke M."/>
            <person name="Buckel W."/>
            <person name="Hinderberger J."/>
            <person name="Li F."/>
            <person name="Hagemeier C."/>
            <person name="Thauer R.K."/>
            <person name="Gottschalk G."/>
        </authorList>
    </citation>
    <scope>NUCLEOTIDE SEQUENCE [LARGE SCALE GENOMIC DNA]</scope>
    <source>
        <strain>ATCC 8527 / DSM 555 / NBRC 12016 / NCIMB 10680 / K1</strain>
    </source>
</reference>
<name>RECO_CLOK5</name>
<evidence type="ECO:0000255" key="1">
    <source>
        <dbReference type="HAMAP-Rule" id="MF_00201"/>
    </source>
</evidence>
<organism>
    <name type="scientific">Clostridium kluyveri (strain ATCC 8527 / DSM 555 / NBRC 12016 / NCIMB 10680 / K1)</name>
    <dbReference type="NCBI Taxonomy" id="431943"/>
    <lineage>
        <taxon>Bacteria</taxon>
        <taxon>Bacillati</taxon>
        <taxon>Bacillota</taxon>
        <taxon>Clostridia</taxon>
        <taxon>Eubacteriales</taxon>
        <taxon>Clostridiaceae</taxon>
        <taxon>Clostridium</taxon>
    </lineage>
</organism>